<keyword id="KW-0378">Hydrolase</keyword>
<keyword id="KW-0546">Nucleotide metabolism</keyword>
<keyword id="KW-0547">Nucleotide-binding</keyword>
<gene>
    <name evidence="1" type="primary">dcd</name>
    <name type="ordered locus">SSPA0702</name>
</gene>
<dbReference type="EC" id="3.5.4.13" evidence="1"/>
<dbReference type="EMBL" id="FM200053">
    <property type="protein sequence ID" value="CAR58835.1"/>
    <property type="molecule type" value="Genomic_DNA"/>
</dbReference>
<dbReference type="RefSeq" id="WP_001234783.1">
    <property type="nucleotide sequence ID" value="NC_011147.1"/>
</dbReference>
<dbReference type="SMR" id="B5BF74"/>
<dbReference type="KEGG" id="sek:SSPA0702"/>
<dbReference type="HOGENOM" id="CLU_087476_2_0_6"/>
<dbReference type="UniPathway" id="UPA00610">
    <property type="reaction ID" value="UER00665"/>
</dbReference>
<dbReference type="Proteomes" id="UP000001869">
    <property type="component" value="Chromosome"/>
</dbReference>
<dbReference type="GO" id="GO:0008829">
    <property type="term" value="F:dCTP deaminase activity"/>
    <property type="evidence" value="ECO:0007669"/>
    <property type="project" value="UniProtKB-UniRule"/>
</dbReference>
<dbReference type="GO" id="GO:0000166">
    <property type="term" value="F:nucleotide binding"/>
    <property type="evidence" value="ECO:0007669"/>
    <property type="project" value="UniProtKB-KW"/>
</dbReference>
<dbReference type="GO" id="GO:0006226">
    <property type="term" value="P:dUMP biosynthetic process"/>
    <property type="evidence" value="ECO:0007669"/>
    <property type="project" value="UniProtKB-UniPathway"/>
</dbReference>
<dbReference type="GO" id="GO:0006229">
    <property type="term" value="P:dUTP biosynthetic process"/>
    <property type="evidence" value="ECO:0007669"/>
    <property type="project" value="UniProtKB-UniRule"/>
</dbReference>
<dbReference type="GO" id="GO:0015949">
    <property type="term" value="P:nucleobase-containing small molecule interconversion"/>
    <property type="evidence" value="ECO:0007669"/>
    <property type="project" value="TreeGrafter"/>
</dbReference>
<dbReference type="CDD" id="cd07557">
    <property type="entry name" value="trimeric_dUTPase"/>
    <property type="match status" value="1"/>
</dbReference>
<dbReference type="FunFam" id="2.70.40.10:FF:000003">
    <property type="entry name" value="dCTP deaminase"/>
    <property type="match status" value="1"/>
</dbReference>
<dbReference type="Gene3D" id="2.70.40.10">
    <property type="match status" value="1"/>
</dbReference>
<dbReference type="HAMAP" id="MF_00146">
    <property type="entry name" value="dCTP_deaminase"/>
    <property type="match status" value="1"/>
</dbReference>
<dbReference type="InterPro" id="IPR011962">
    <property type="entry name" value="dCTP_deaminase"/>
</dbReference>
<dbReference type="InterPro" id="IPR036157">
    <property type="entry name" value="dUTPase-like_sf"/>
</dbReference>
<dbReference type="InterPro" id="IPR033704">
    <property type="entry name" value="dUTPase_trimeric"/>
</dbReference>
<dbReference type="NCBIfam" id="TIGR02274">
    <property type="entry name" value="dCTP_deam"/>
    <property type="match status" value="1"/>
</dbReference>
<dbReference type="PANTHER" id="PTHR42680">
    <property type="entry name" value="DCTP DEAMINASE"/>
    <property type="match status" value="1"/>
</dbReference>
<dbReference type="PANTHER" id="PTHR42680:SF3">
    <property type="entry name" value="DCTP DEAMINASE"/>
    <property type="match status" value="1"/>
</dbReference>
<dbReference type="Pfam" id="PF22769">
    <property type="entry name" value="DCD"/>
    <property type="match status" value="1"/>
</dbReference>
<dbReference type="SUPFAM" id="SSF51283">
    <property type="entry name" value="dUTPase-like"/>
    <property type="match status" value="1"/>
</dbReference>
<proteinExistence type="inferred from homology"/>
<comment type="function">
    <text evidence="1">Catalyzes the deamination of dCTP to dUTP.</text>
</comment>
<comment type="catalytic activity">
    <reaction evidence="1">
        <text>dCTP + H2O + H(+) = dUTP + NH4(+)</text>
        <dbReference type="Rhea" id="RHEA:22680"/>
        <dbReference type="ChEBI" id="CHEBI:15377"/>
        <dbReference type="ChEBI" id="CHEBI:15378"/>
        <dbReference type="ChEBI" id="CHEBI:28938"/>
        <dbReference type="ChEBI" id="CHEBI:61481"/>
        <dbReference type="ChEBI" id="CHEBI:61555"/>
        <dbReference type="EC" id="3.5.4.13"/>
    </reaction>
</comment>
<comment type="pathway">
    <text evidence="1">Pyrimidine metabolism; dUMP biosynthesis; dUMP from dCTP (dUTP route): step 1/2.</text>
</comment>
<comment type="subunit">
    <text evidence="1">Homotrimer.</text>
</comment>
<comment type="similarity">
    <text evidence="1">Belongs to the dCTP deaminase family.</text>
</comment>
<sequence length="193" mass="21236">MRLCDRDIEAWLDEGRLSITPRPPVERINGATVDVRLGNKFRTFRGHTAAFIDLSGPKDEVSAALDRVMSDEIVLPDGEAFYLHPGELALAVTFESVTLPPDLVGWLDGRSSLARLGLMVHVTAHRIDPGWSGCIVLEFYNSGKLPLALRPGMLIGALSFEPLSGPAARPYNRRQDAKYRDQQGAVASRIDKD</sequence>
<reference key="1">
    <citation type="journal article" date="2009" name="BMC Genomics">
        <title>Pseudogene accumulation in the evolutionary histories of Salmonella enterica serovars Paratyphi A and Typhi.</title>
        <authorList>
            <person name="Holt K.E."/>
            <person name="Thomson N.R."/>
            <person name="Wain J."/>
            <person name="Langridge G.C."/>
            <person name="Hasan R."/>
            <person name="Bhutta Z.A."/>
            <person name="Quail M.A."/>
            <person name="Norbertczak H."/>
            <person name="Walker D."/>
            <person name="Simmonds M."/>
            <person name="White B."/>
            <person name="Bason N."/>
            <person name="Mungall K."/>
            <person name="Dougan G."/>
            <person name="Parkhill J."/>
        </authorList>
    </citation>
    <scope>NUCLEOTIDE SEQUENCE [LARGE SCALE GENOMIC DNA]</scope>
    <source>
        <strain>AKU_12601</strain>
    </source>
</reference>
<evidence type="ECO:0000255" key="1">
    <source>
        <dbReference type="HAMAP-Rule" id="MF_00146"/>
    </source>
</evidence>
<evidence type="ECO:0000256" key="2">
    <source>
        <dbReference type="SAM" id="MobiDB-lite"/>
    </source>
</evidence>
<organism>
    <name type="scientific">Salmonella paratyphi A (strain AKU_12601)</name>
    <dbReference type="NCBI Taxonomy" id="554290"/>
    <lineage>
        <taxon>Bacteria</taxon>
        <taxon>Pseudomonadati</taxon>
        <taxon>Pseudomonadota</taxon>
        <taxon>Gammaproteobacteria</taxon>
        <taxon>Enterobacterales</taxon>
        <taxon>Enterobacteriaceae</taxon>
        <taxon>Salmonella</taxon>
    </lineage>
</organism>
<accession>B5BF74</accession>
<protein>
    <recommendedName>
        <fullName evidence="1">dCTP deaminase</fullName>
        <ecNumber evidence="1">3.5.4.13</ecNumber>
    </recommendedName>
    <alternativeName>
        <fullName evidence="1">Deoxycytidine triphosphate deaminase</fullName>
    </alternativeName>
</protein>
<feature type="chain" id="PRO_1000096452" description="dCTP deaminase">
    <location>
        <begin position="1"/>
        <end position="193"/>
    </location>
</feature>
<feature type="region of interest" description="Disordered" evidence="2">
    <location>
        <begin position="169"/>
        <end position="193"/>
    </location>
</feature>
<feature type="active site" description="Proton donor/acceptor" evidence="1">
    <location>
        <position position="138"/>
    </location>
</feature>
<feature type="binding site" evidence="1">
    <location>
        <begin position="110"/>
        <end position="115"/>
    </location>
    <ligand>
        <name>dCTP</name>
        <dbReference type="ChEBI" id="CHEBI:61481"/>
    </ligand>
</feature>
<feature type="binding site" evidence="1">
    <location>
        <position position="128"/>
    </location>
    <ligand>
        <name>dCTP</name>
        <dbReference type="ChEBI" id="CHEBI:61481"/>
    </ligand>
</feature>
<feature type="binding site" evidence="1">
    <location>
        <begin position="136"/>
        <end position="138"/>
    </location>
    <ligand>
        <name>dCTP</name>
        <dbReference type="ChEBI" id="CHEBI:61481"/>
    </ligand>
</feature>
<feature type="binding site" evidence="1">
    <location>
        <position position="171"/>
    </location>
    <ligand>
        <name>dCTP</name>
        <dbReference type="ChEBI" id="CHEBI:61481"/>
    </ligand>
</feature>
<feature type="binding site" evidence="1">
    <location>
        <position position="178"/>
    </location>
    <ligand>
        <name>dCTP</name>
        <dbReference type="ChEBI" id="CHEBI:61481"/>
    </ligand>
</feature>
<feature type="binding site" evidence="1">
    <location>
        <position position="182"/>
    </location>
    <ligand>
        <name>dCTP</name>
        <dbReference type="ChEBI" id="CHEBI:61481"/>
    </ligand>
</feature>
<name>DCD_SALPK</name>